<name>KCY_METST</name>
<keyword id="KW-0067">ATP-binding</keyword>
<keyword id="KW-0963">Cytoplasm</keyword>
<keyword id="KW-0418">Kinase</keyword>
<keyword id="KW-0547">Nucleotide-binding</keyword>
<keyword id="KW-1185">Reference proteome</keyword>
<keyword id="KW-0808">Transferase</keyword>
<feature type="chain" id="PRO_1000005679" description="Cytidylate kinase">
    <location>
        <begin position="1"/>
        <end position="173"/>
    </location>
</feature>
<feature type="binding site" evidence="1">
    <location>
        <begin position="7"/>
        <end position="15"/>
    </location>
    <ligand>
        <name>ATP</name>
        <dbReference type="ChEBI" id="CHEBI:30616"/>
    </ligand>
</feature>
<comment type="catalytic activity">
    <reaction evidence="1">
        <text>CMP + ATP = CDP + ADP</text>
        <dbReference type="Rhea" id="RHEA:11600"/>
        <dbReference type="ChEBI" id="CHEBI:30616"/>
        <dbReference type="ChEBI" id="CHEBI:58069"/>
        <dbReference type="ChEBI" id="CHEBI:60377"/>
        <dbReference type="ChEBI" id="CHEBI:456216"/>
        <dbReference type="EC" id="2.7.4.25"/>
    </reaction>
</comment>
<comment type="catalytic activity">
    <reaction evidence="1">
        <text>dCMP + ATP = dCDP + ADP</text>
        <dbReference type="Rhea" id="RHEA:25094"/>
        <dbReference type="ChEBI" id="CHEBI:30616"/>
        <dbReference type="ChEBI" id="CHEBI:57566"/>
        <dbReference type="ChEBI" id="CHEBI:58593"/>
        <dbReference type="ChEBI" id="CHEBI:456216"/>
        <dbReference type="EC" id="2.7.4.25"/>
    </reaction>
</comment>
<comment type="subcellular location">
    <subcellularLocation>
        <location evidence="1">Cytoplasm</location>
    </subcellularLocation>
</comment>
<comment type="similarity">
    <text evidence="1">Belongs to the cytidylate kinase family. Type 2 subfamily.</text>
</comment>
<protein>
    <recommendedName>
        <fullName evidence="1">Cytidylate kinase</fullName>
        <shortName evidence="1">CK</shortName>
        <ecNumber evidence="1">2.7.4.25</ecNumber>
    </recommendedName>
    <alternativeName>
        <fullName evidence="1">Cytidine monophosphate kinase</fullName>
        <shortName evidence="1">CMP kinase</shortName>
    </alternativeName>
</protein>
<organism>
    <name type="scientific">Methanosphaera stadtmanae (strain ATCC 43021 / DSM 3091 / JCM 11832 / MCB-3)</name>
    <dbReference type="NCBI Taxonomy" id="339860"/>
    <lineage>
        <taxon>Archaea</taxon>
        <taxon>Methanobacteriati</taxon>
        <taxon>Methanobacteriota</taxon>
        <taxon>Methanomada group</taxon>
        <taxon>Methanobacteria</taxon>
        <taxon>Methanobacteriales</taxon>
        <taxon>Methanobacteriaceae</taxon>
        <taxon>Methanosphaera</taxon>
    </lineage>
</organism>
<proteinExistence type="inferred from homology"/>
<evidence type="ECO:0000255" key="1">
    <source>
        <dbReference type="HAMAP-Rule" id="MF_00239"/>
    </source>
</evidence>
<accession>Q2NFY4</accession>
<gene>
    <name evidence="1" type="primary">cmk</name>
    <name type="ordered locus">Msp_0881</name>
</gene>
<reference key="1">
    <citation type="journal article" date="2006" name="J. Bacteriol.">
        <title>The genome sequence of Methanosphaera stadtmanae reveals why this human intestinal archaeon is restricted to methanol and H2 for methane formation and ATP synthesis.</title>
        <authorList>
            <person name="Fricke W.F."/>
            <person name="Seedorf H."/>
            <person name="Henne A."/>
            <person name="Kruer M."/>
            <person name="Liesegang H."/>
            <person name="Hedderich R."/>
            <person name="Gottschalk G."/>
            <person name="Thauer R.K."/>
        </authorList>
    </citation>
    <scope>NUCLEOTIDE SEQUENCE [LARGE SCALE GENOMIC DNA]</scope>
    <source>
        <strain>ATCC 43021 / DSM 3091 / JCM 11832 / MCB-3</strain>
    </source>
</reference>
<sequence length="173" mass="19626">MIITIGGLAGTGTSTTAKTLSQEINIPFISAGDVFRQMAVENNMTLLEFSEFAEGNDNIDKALDKRQAEIANNSENLIVEGRISAFFVNADYRIWLKAPDNVRAERISYREDKSLDTVKQEIAERTASERKRYMEIHDIDIDNLDIYDLIINTDTFNIESTVNIIKKCIENKK</sequence>
<dbReference type="EC" id="2.7.4.25" evidence="1"/>
<dbReference type="EMBL" id="CP000102">
    <property type="protein sequence ID" value="ABC57269.1"/>
    <property type="molecule type" value="Genomic_DNA"/>
</dbReference>
<dbReference type="RefSeq" id="WP_011406468.1">
    <property type="nucleotide sequence ID" value="NC_007681.1"/>
</dbReference>
<dbReference type="SMR" id="Q2NFY4"/>
<dbReference type="STRING" id="339860.Msp_0881"/>
<dbReference type="GeneID" id="41325456"/>
<dbReference type="KEGG" id="mst:Msp_0881"/>
<dbReference type="eggNOG" id="arCOG01037">
    <property type="taxonomic scope" value="Archaea"/>
</dbReference>
<dbReference type="HOGENOM" id="CLU_079959_1_0_2"/>
<dbReference type="OrthoDB" id="31096at2157"/>
<dbReference type="Proteomes" id="UP000001931">
    <property type="component" value="Chromosome"/>
</dbReference>
<dbReference type="GO" id="GO:0005737">
    <property type="term" value="C:cytoplasm"/>
    <property type="evidence" value="ECO:0007669"/>
    <property type="project" value="UniProtKB-SubCell"/>
</dbReference>
<dbReference type="GO" id="GO:0005524">
    <property type="term" value="F:ATP binding"/>
    <property type="evidence" value="ECO:0007669"/>
    <property type="project" value="UniProtKB-UniRule"/>
</dbReference>
<dbReference type="GO" id="GO:0036430">
    <property type="term" value="F:CMP kinase activity"/>
    <property type="evidence" value="ECO:0007669"/>
    <property type="project" value="RHEA"/>
</dbReference>
<dbReference type="GO" id="GO:0036431">
    <property type="term" value="F:dCMP kinase activity"/>
    <property type="evidence" value="ECO:0007669"/>
    <property type="project" value="RHEA"/>
</dbReference>
<dbReference type="GO" id="GO:0006220">
    <property type="term" value="P:pyrimidine nucleotide metabolic process"/>
    <property type="evidence" value="ECO:0007669"/>
    <property type="project" value="UniProtKB-UniRule"/>
</dbReference>
<dbReference type="CDD" id="cd02020">
    <property type="entry name" value="CMPK"/>
    <property type="match status" value="1"/>
</dbReference>
<dbReference type="Gene3D" id="3.40.50.300">
    <property type="entry name" value="P-loop containing nucleotide triphosphate hydrolases"/>
    <property type="match status" value="1"/>
</dbReference>
<dbReference type="HAMAP" id="MF_00239">
    <property type="entry name" value="Cytidyl_kinase_type2"/>
    <property type="match status" value="1"/>
</dbReference>
<dbReference type="InterPro" id="IPR011892">
    <property type="entry name" value="Cyt_kin_arch"/>
</dbReference>
<dbReference type="InterPro" id="IPR011994">
    <property type="entry name" value="Cytidylate_kinase_dom"/>
</dbReference>
<dbReference type="InterPro" id="IPR027417">
    <property type="entry name" value="P-loop_NTPase"/>
</dbReference>
<dbReference type="NCBIfam" id="TIGR02173">
    <property type="entry name" value="cyt_kin_arch"/>
    <property type="match status" value="1"/>
</dbReference>
<dbReference type="Pfam" id="PF13189">
    <property type="entry name" value="Cytidylate_kin2"/>
    <property type="match status" value="1"/>
</dbReference>
<dbReference type="SUPFAM" id="SSF52540">
    <property type="entry name" value="P-loop containing nucleoside triphosphate hydrolases"/>
    <property type="match status" value="1"/>
</dbReference>